<name>US03_HCMVT</name>
<reference key="1">
    <citation type="journal article" date="2009" name="J. Gen. Virol.">
        <title>High-throughput sequence analysis of variants of human cytomegalovirus strains Towne and AD169.</title>
        <authorList>
            <person name="Bradley A.J."/>
            <person name="Lurain N.S."/>
            <person name="Ghazal P."/>
            <person name="Trivedi U."/>
            <person name="Cunningham C."/>
            <person name="Baluchova K."/>
            <person name="Gatherer D."/>
            <person name="Wilkinson G.W."/>
            <person name="Dargan D.J."/>
            <person name="Davison A.J."/>
        </authorList>
    </citation>
    <scope>NUCLEOTIDE SEQUENCE [LARGE SCALE GENOMIC DNA]</scope>
    <source>
        <strain>Towne</strain>
    </source>
</reference>
<reference key="2">
    <citation type="journal article" date="2004" name="J. Gen. Virol.">
        <title>Genetic content of wild-type human cytomegalovirus.</title>
        <authorList>
            <person name="Dolan A."/>
            <person name="Cunningham C."/>
            <person name="Hector R.D."/>
            <person name="Hassan-Walker A.F."/>
            <person name="Lee L."/>
            <person name="Addison C."/>
            <person name="Dargan D.J."/>
            <person name="McGeoch D.J."/>
            <person name="Gatherer D."/>
            <person name="Emery V.C."/>
            <person name="Griffiths P.D."/>
            <person name="Sinzger C."/>
            <person name="McSharry B.P."/>
            <person name="Wilkinson G.W.G."/>
            <person name="Davison A.J."/>
        </authorList>
    </citation>
    <scope>NUCLEOTIDE SEQUENCE [LARGE SCALE GENOMIC DNA]</scope>
</reference>
<reference key="3">
    <citation type="journal article" date="2003" name="J. Virol.">
        <title>Determinant for endoplasmic reticulum retention in the luminal domain of the human cytomegalovirus US3 glycoprotein.</title>
        <authorList>
            <person name="Lee S."/>
            <person name="Park B."/>
            <person name="Ahn K."/>
        </authorList>
    </citation>
    <scope>MUTAGENESIS OF SER-58; GLU-63 AND LYS-64</scope>
</reference>
<comment type="function">
    <text>Retains, but does not degrade MHC class I heterodimers in the endoplasmic reticulum during the immediate-early period of virus infection, thereby impairing their transport and maturation. Forms a complex with beta-2-microglobulin-associated class I heavy chains, which accumulate in the ER. In consequence, infected cells are masked for immune recognition by cytotoxic T-lymphocytes.</text>
</comment>
<comment type="subunit">
    <text evidence="1">Monomer.</text>
</comment>
<comment type="subcellular location">
    <subcellularLocation>
        <location>Host endoplasmic reticulum membrane</location>
        <topology>Single-pass type I membrane protein</topology>
    </subcellularLocation>
</comment>
<comment type="developmental stage">
    <text>Expressed at immediate-early period of virus infection and at reduced levels at early-late times.</text>
</comment>
<comment type="PTM">
    <text evidence="1">The signal sequence is not cleaved.</text>
</comment>
<comment type="PTM">
    <text>N-glycosylated; mostly exists in a high-mannose form.</text>
</comment>
<comment type="similarity">
    <text evidence="4">Belongs to the cytomegalovirus US2 family.</text>
</comment>
<protein>
    <recommendedName>
        <fullName>Membrane glycoprotein US3</fullName>
    </recommendedName>
</protein>
<keyword id="KW-1015">Disulfide bond</keyword>
<keyword id="KW-0244">Early protein</keyword>
<keyword id="KW-0325">Glycoprotein</keyword>
<keyword id="KW-1038">Host endoplasmic reticulum</keyword>
<keyword id="KW-1043">Host membrane</keyword>
<keyword id="KW-0945">Host-virus interaction</keyword>
<keyword id="KW-0393">Immunoglobulin domain</keyword>
<keyword id="KW-0430">Lectin</keyword>
<keyword id="KW-0465">Mannose-binding</keyword>
<keyword id="KW-0472">Membrane</keyword>
<keyword id="KW-0732">Signal</keyword>
<keyword id="KW-0812">Transmembrane</keyword>
<keyword id="KW-1133">Transmembrane helix</keyword>
<keyword id="KW-0899">Viral immunoevasion</keyword>
<feature type="signal peptide" evidence="2">
    <location>
        <begin position="1"/>
        <end position="20"/>
    </location>
</feature>
<feature type="chain" id="PRO_0000416722" description="Membrane glycoprotein US3">
    <location>
        <begin position="21"/>
        <end position="186"/>
    </location>
</feature>
<feature type="topological domain" description="Lumenal" evidence="2">
    <location>
        <begin position="21"/>
        <end position="160"/>
    </location>
</feature>
<feature type="transmembrane region" description="Helical" evidence="2">
    <location>
        <begin position="161"/>
        <end position="181"/>
    </location>
</feature>
<feature type="topological domain" description="Cytoplasmic" evidence="2">
    <location>
        <begin position="182"/>
        <end position="186"/>
    </location>
</feature>
<feature type="glycosylation site" description="N-linked (GlcNAc...) asparagine; by host" evidence="2">
    <location>
        <position position="60"/>
    </location>
</feature>
<feature type="disulfide bond" evidence="1">
    <location>
        <begin position="44"/>
        <end position="129"/>
    </location>
</feature>
<feature type="mutagenesis site" description="Loss of endoplasmic reticulum retention." evidence="3">
    <original>S</original>
    <variation>A</variation>
    <location>
        <position position="58"/>
    </location>
</feature>
<feature type="mutagenesis site" description="Loss of endoplasmic reticulum retention." evidence="3">
    <original>E</original>
    <variation>A</variation>
    <location>
        <position position="63"/>
    </location>
</feature>
<feature type="mutagenesis site" description="Loss of endoplasmic reticulum retention." evidence="3">
    <original>K</original>
    <variation>A</variation>
    <location>
        <position position="64"/>
    </location>
</feature>
<evidence type="ECO:0000250" key="1"/>
<evidence type="ECO:0000255" key="2"/>
<evidence type="ECO:0000269" key="3">
    <source>
    </source>
</evidence>
<evidence type="ECO:0000305" key="4"/>
<proteinExistence type="evidence at protein level"/>
<accession>B9VXD7</accession>
<sequence length="186" mass="21515">MKPVLVLAILAVLFLRLADSVPRPLDVVVSEIRSAHFRVEENQCWFHMGMLHYKGRMSGNFTEKHFVSVGIVSQSYMDRLQVSGEQYHHDERGAYFEWNIGGHPVPHTVDMVDITLSTRWGDPKKYAACVPQVRMDYSSQTINWYLQRSIRDDNWGLLFRTLLVYLFSLVVLVLLTVGVSARLRFI</sequence>
<gene>
    <name type="primary">US3</name>
</gene>
<dbReference type="EMBL" id="FJ616285">
    <property type="protein sequence ID" value="ACM48091.1"/>
    <property type="molecule type" value="Genomic_DNA"/>
</dbReference>
<dbReference type="SMR" id="B9VXD7"/>
<dbReference type="GlyCosmos" id="B9VXD7">
    <property type="glycosylation" value="1 site, No reported glycans"/>
</dbReference>
<dbReference type="Proteomes" id="UP000006907">
    <property type="component" value="Segment"/>
</dbReference>
<dbReference type="GO" id="GO:0044167">
    <property type="term" value="C:host cell endoplasmic reticulum membrane"/>
    <property type="evidence" value="ECO:0007669"/>
    <property type="project" value="UniProtKB-SubCell"/>
</dbReference>
<dbReference type="GO" id="GO:0016020">
    <property type="term" value="C:membrane"/>
    <property type="evidence" value="ECO:0007669"/>
    <property type="project" value="UniProtKB-KW"/>
</dbReference>
<dbReference type="GO" id="GO:0005537">
    <property type="term" value="F:D-mannose binding"/>
    <property type="evidence" value="ECO:0007669"/>
    <property type="project" value="UniProtKB-KW"/>
</dbReference>
<dbReference type="InterPro" id="IPR009237">
    <property type="entry name" value="Herpes_US2/US3"/>
</dbReference>
<dbReference type="InterPro" id="IPR014756">
    <property type="entry name" value="Ig_E-set"/>
</dbReference>
<dbReference type="Pfam" id="PF05963">
    <property type="entry name" value="Cytomega_US3"/>
    <property type="match status" value="1"/>
</dbReference>
<dbReference type="SUPFAM" id="SSF81296">
    <property type="entry name" value="E set domains"/>
    <property type="match status" value="1"/>
</dbReference>
<organismHost>
    <name type="scientific">Homo sapiens</name>
    <name type="common">Human</name>
    <dbReference type="NCBI Taxonomy" id="9606"/>
</organismHost>
<organism>
    <name type="scientific">Human cytomegalovirus (strain Towne)</name>
    <name type="common">HHV-5</name>
    <name type="synonym">Human herpesvirus 5</name>
    <dbReference type="NCBI Taxonomy" id="10363"/>
    <lineage>
        <taxon>Viruses</taxon>
        <taxon>Duplodnaviria</taxon>
        <taxon>Heunggongvirae</taxon>
        <taxon>Peploviricota</taxon>
        <taxon>Herviviricetes</taxon>
        <taxon>Herpesvirales</taxon>
        <taxon>Orthoherpesviridae</taxon>
        <taxon>Betaherpesvirinae</taxon>
        <taxon>Cytomegalovirus</taxon>
        <taxon>Cytomegalovirus humanbeta5</taxon>
        <taxon>Human cytomegalovirus</taxon>
    </lineage>
</organism>